<reference key="1">
    <citation type="journal article" date="2015" name="Genome Announc.">
        <title>Complete Genome Sequence of Methanosphaerula palustris E1-9CT, a Hydrogenotrophic Methanogen Isolated from a Minerotrophic Fen Peatland.</title>
        <authorList>
            <person name="Cadillo-Quiroz H."/>
            <person name="Browne P."/>
            <person name="Kyrpides N."/>
            <person name="Woyke T."/>
            <person name="Goodwin L."/>
            <person name="Detter C."/>
            <person name="Yavitt J.B."/>
            <person name="Zinder S.H."/>
        </authorList>
    </citation>
    <scope>NUCLEOTIDE SEQUENCE [LARGE SCALE GENOMIC DNA]</scope>
    <source>
        <strain>ATCC BAA-1556 / DSM 19958 / E1-9c</strain>
    </source>
</reference>
<comment type="function">
    <text evidence="1">Catalytic subunit of DNA primase, an RNA polymerase that catalyzes the synthesis of short RNA molecules used as primers for DNA polymerase during DNA replication. The small subunit contains the primase catalytic core and has DNA synthesis activity on its own. Binding to the large subunit stabilizes and modulates the activity, increasing the rate of DNA synthesis while decreasing the length of the DNA fragments, and conferring RNA synthesis capability. The DNA polymerase activity may enable DNA primase to also catalyze primer extension after primer synthesis. May also play a role in DNA repair.</text>
</comment>
<comment type="cofactor">
    <cofactor evidence="1">
        <name>Mg(2+)</name>
        <dbReference type="ChEBI" id="CHEBI:18420"/>
    </cofactor>
    <cofactor evidence="1">
        <name>Mn(2+)</name>
        <dbReference type="ChEBI" id="CHEBI:29035"/>
    </cofactor>
</comment>
<comment type="subunit">
    <text evidence="1">Heterodimer of a small subunit (PriS) and a large subunit (PriL).</text>
</comment>
<comment type="similarity">
    <text evidence="1">Belongs to the eukaryotic-type primase small subunit family.</text>
</comment>
<name>PRIS_METPE</name>
<accession>B8GGQ0</accession>
<keyword id="KW-0235">DNA replication</keyword>
<keyword id="KW-0240">DNA-directed RNA polymerase</keyword>
<keyword id="KW-0460">Magnesium</keyword>
<keyword id="KW-0464">Manganese</keyword>
<keyword id="KW-0479">Metal-binding</keyword>
<keyword id="KW-0548">Nucleotidyltransferase</keyword>
<keyword id="KW-0639">Primosome</keyword>
<keyword id="KW-1185">Reference proteome</keyword>
<keyword id="KW-0804">Transcription</keyword>
<keyword id="KW-0808">Transferase</keyword>
<evidence type="ECO:0000255" key="1">
    <source>
        <dbReference type="HAMAP-Rule" id="MF_00700"/>
    </source>
</evidence>
<protein>
    <recommendedName>
        <fullName evidence="1">DNA primase small subunit PriS</fullName>
        <ecNumber evidence="1">2.7.7.-</ecNumber>
    </recommendedName>
</protein>
<gene>
    <name evidence="1" type="primary">priS</name>
    <name type="synonym">priA</name>
    <name type="ordered locus">Mpal_0953</name>
</gene>
<sequence length="378" mass="41967">MRPATLEFIKQQFTGYYQRVYPVTPDALLQREWGFIFFDAGREVRMRRHLAFGERQELTEYLKTMVPAHVFYSSAYYESPGAPTMAEKGWSGADLIFDLDADHIMHGSYQAMLARVKEEVQKLLAVLTDELGFSEKYCEVVFSGGRGYHIHVNDLAVRSWGSAERREVVNYVCGIGLDPGLLIRAGTDLSTGWPRRYLGALDGYLAWLKVKNQKDALLHLSSIKGVSRSSAAGLLKSLDQVRATIGGDHPEKVLGDRVLRAVTTNDNPDWKKRLQETGVQADEPVTTDIKRLIRMPTSLHGGSGLRVVPLTISEVQEFDPLIDAVVFGDRDVQVTAEKTLTVSLLGNTYEVSAGTQTVPEAVAVFLCCRGLAEIAEGR</sequence>
<feature type="chain" id="PRO_1000192552" description="DNA primase small subunit PriS">
    <location>
        <begin position="1"/>
        <end position="378"/>
    </location>
</feature>
<feature type="active site" evidence="1">
    <location>
        <position position="98"/>
    </location>
</feature>
<feature type="active site" evidence="1">
    <location>
        <position position="100"/>
    </location>
</feature>
<feature type="active site" evidence="1">
    <location>
        <position position="282"/>
    </location>
</feature>
<organism>
    <name type="scientific">Methanosphaerula palustris (strain ATCC BAA-1556 / DSM 19958 / E1-9c)</name>
    <dbReference type="NCBI Taxonomy" id="521011"/>
    <lineage>
        <taxon>Archaea</taxon>
        <taxon>Methanobacteriati</taxon>
        <taxon>Methanobacteriota</taxon>
        <taxon>Stenosarchaea group</taxon>
        <taxon>Methanomicrobia</taxon>
        <taxon>Methanomicrobiales</taxon>
        <taxon>Methanoregulaceae</taxon>
        <taxon>Methanosphaerula</taxon>
    </lineage>
</organism>
<dbReference type="EC" id="2.7.7.-" evidence="1"/>
<dbReference type="EMBL" id="CP001338">
    <property type="protein sequence ID" value="ACL16305.1"/>
    <property type="molecule type" value="Genomic_DNA"/>
</dbReference>
<dbReference type="RefSeq" id="WP_012617624.1">
    <property type="nucleotide sequence ID" value="NC_011832.1"/>
</dbReference>
<dbReference type="SMR" id="B8GGQ0"/>
<dbReference type="STRING" id="521011.Mpal_0953"/>
<dbReference type="GeneID" id="7272446"/>
<dbReference type="KEGG" id="mpl:Mpal_0953"/>
<dbReference type="eggNOG" id="arCOG04110">
    <property type="taxonomic scope" value="Archaea"/>
</dbReference>
<dbReference type="HOGENOM" id="CLU_056123_1_0_2"/>
<dbReference type="OrthoDB" id="31125at2157"/>
<dbReference type="Proteomes" id="UP000002457">
    <property type="component" value="Chromosome"/>
</dbReference>
<dbReference type="GO" id="GO:0000428">
    <property type="term" value="C:DNA-directed RNA polymerase complex"/>
    <property type="evidence" value="ECO:0007669"/>
    <property type="project" value="UniProtKB-KW"/>
</dbReference>
<dbReference type="GO" id="GO:1990077">
    <property type="term" value="C:primosome complex"/>
    <property type="evidence" value="ECO:0007669"/>
    <property type="project" value="UniProtKB-KW"/>
</dbReference>
<dbReference type="GO" id="GO:0003899">
    <property type="term" value="F:DNA-directed RNA polymerase activity"/>
    <property type="evidence" value="ECO:0007669"/>
    <property type="project" value="InterPro"/>
</dbReference>
<dbReference type="GO" id="GO:0046872">
    <property type="term" value="F:metal ion binding"/>
    <property type="evidence" value="ECO:0007669"/>
    <property type="project" value="UniProtKB-KW"/>
</dbReference>
<dbReference type="GO" id="GO:0006269">
    <property type="term" value="P:DNA replication, synthesis of primer"/>
    <property type="evidence" value="ECO:0007669"/>
    <property type="project" value="UniProtKB-UniRule"/>
</dbReference>
<dbReference type="CDD" id="cd04860">
    <property type="entry name" value="AE_Prim_S"/>
    <property type="match status" value="1"/>
</dbReference>
<dbReference type="Gene3D" id="3.90.920.10">
    <property type="entry name" value="DNA primase, PRIM domain"/>
    <property type="match status" value="1"/>
</dbReference>
<dbReference type="HAMAP" id="MF_00700">
    <property type="entry name" value="DNA_primase_sml_arc"/>
    <property type="match status" value="1"/>
</dbReference>
<dbReference type="InterPro" id="IPR002755">
    <property type="entry name" value="DNA_primase_S"/>
</dbReference>
<dbReference type="InterPro" id="IPR014052">
    <property type="entry name" value="DNA_primase_ssu_euk/arc"/>
</dbReference>
<dbReference type="InterPro" id="IPR023639">
    <property type="entry name" value="DNA_primase_ssu_PriS"/>
</dbReference>
<dbReference type="NCBIfam" id="TIGR00335">
    <property type="entry name" value="primase_sml"/>
    <property type="match status" value="1"/>
</dbReference>
<dbReference type="PANTHER" id="PTHR10536">
    <property type="entry name" value="DNA PRIMASE SMALL SUBUNIT"/>
    <property type="match status" value="1"/>
</dbReference>
<dbReference type="Pfam" id="PF01896">
    <property type="entry name" value="DNA_primase_S"/>
    <property type="match status" value="1"/>
</dbReference>
<dbReference type="SUPFAM" id="SSF56747">
    <property type="entry name" value="Prim-pol domain"/>
    <property type="match status" value="1"/>
</dbReference>
<proteinExistence type="inferred from homology"/>